<dbReference type="EMBL" id="LT708304">
    <property type="protein sequence ID" value="SIU02282.1"/>
    <property type="molecule type" value="Genomic_DNA"/>
</dbReference>
<dbReference type="RefSeq" id="NP_857293.1">
    <property type="nucleotide sequence ID" value="NC_002945.3"/>
</dbReference>
<dbReference type="RefSeq" id="WP_003419582.1">
    <property type="nucleotide sequence ID" value="NC_002945.4"/>
</dbReference>
<dbReference type="SMR" id="P59985"/>
<dbReference type="KEGG" id="mbo:BQ2027_MB3654"/>
<dbReference type="PATRIC" id="fig|233413.5.peg.3999"/>
<dbReference type="Proteomes" id="UP000001419">
    <property type="component" value="Chromosome"/>
</dbReference>
<dbReference type="GO" id="GO:0005886">
    <property type="term" value="C:plasma membrane"/>
    <property type="evidence" value="ECO:0007669"/>
    <property type="project" value="UniProtKB-SubCell"/>
</dbReference>
<dbReference type="InterPro" id="IPR050833">
    <property type="entry name" value="Poly_Biosynth_Transport"/>
</dbReference>
<dbReference type="PANTHER" id="PTHR30250:SF11">
    <property type="entry name" value="O-ANTIGEN TRANSPORTER-RELATED"/>
    <property type="match status" value="1"/>
</dbReference>
<dbReference type="PANTHER" id="PTHR30250">
    <property type="entry name" value="PST FAMILY PREDICTED COLANIC ACID TRANSPORTER"/>
    <property type="match status" value="1"/>
</dbReference>
<gene>
    <name type="ordered locus">BQ2027_MB3654</name>
</gene>
<name>Y3654_MYCBO</name>
<sequence length="431" mass="43515">MAVGAAAVTEVGDTASPVGSSGASGGAIASGSVARVGTATAVTALCGYAVIYLAARNLAPNGFSVFGVFWGAFGLVTGAANGLLQETTREVRSLGYLDVSADGRRTHPLRVSGMVGLGSLVVIAGSSPLWSGRVFAEARWLSVALLSIGLAGFCLHATLLGMLAGTNRWTQYGALMVADAVIRVVVAAATFVIGWQLVGFIWATVAGSVAWLIMLMTSPPTRAAARLMTPGATATFLRGAAHSIIAAGASAILVMGFPVLLKLTSNELGAQGGVVILAVTLTRAPLLVPLTAMQGNLIAHFVDERTERIRALIAPAALIGGVGAVGMLAAGVVGPWIMRVAFGSEYQSSSALLAWLTAAAVAIAMLTLTGAAAVAAALHRAYSLGWVGATVGSGLLLLLPLSLETRTVVALLCGPLVGIGVHLVALARTDE</sequence>
<proteinExistence type="predicted"/>
<comment type="subcellular location">
    <subcellularLocation>
        <location evidence="2">Cell membrane</location>
        <topology evidence="2">Multi-pass membrane protein</topology>
    </subcellularLocation>
</comment>
<comment type="similarity">
    <text evidence="2">To M.tuberculosis Rv1510 and Rv3630.</text>
</comment>
<organism>
    <name type="scientific">Mycobacterium bovis (strain ATCC BAA-935 / AF2122/97)</name>
    <dbReference type="NCBI Taxonomy" id="233413"/>
    <lineage>
        <taxon>Bacteria</taxon>
        <taxon>Bacillati</taxon>
        <taxon>Actinomycetota</taxon>
        <taxon>Actinomycetes</taxon>
        <taxon>Mycobacteriales</taxon>
        <taxon>Mycobacteriaceae</taxon>
        <taxon>Mycobacterium</taxon>
        <taxon>Mycobacterium tuberculosis complex</taxon>
    </lineage>
</organism>
<keyword id="KW-1003">Cell membrane</keyword>
<keyword id="KW-0472">Membrane</keyword>
<keyword id="KW-1185">Reference proteome</keyword>
<keyword id="KW-0812">Transmembrane</keyword>
<keyword id="KW-1133">Transmembrane helix</keyword>
<evidence type="ECO:0000255" key="1"/>
<evidence type="ECO:0000305" key="2"/>
<protein>
    <recommendedName>
        <fullName>Uncharacterized protein Mb3654</fullName>
    </recommendedName>
</protein>
<feature type="chain" id="PRO_0000104141" description="Uncharacterized protein Mb3654">
    <location>
        <begin position="1"/>
        <end position="431"/>
    </location>
</feature>
<feature type="transmembrane region" description="Helical" evidence="1">
    <location>
        <begin position="33"/>
        <end position="53"/>
    </location>
</feature>
<feature type="transmembrane region" description="Helical" evidence="1">
    <location>
        <begin position="63"/>
        <end position="83"/>
    </location>
</feature>
<feature type="transmembrane region" description="Helical" evidence="1">
    <location>
        <begin position="111"/>
        <end position="131"/>
    </location>
</feature>
<feature type="transmembrane region" description="Helical" evidence="1">
    <location>
        <begin position="143"/>
        <end position="163"/>
    </location>
</feature>
<feature type="transmembrane region" description="Helical" evidence="1">
    <location>
        <begin position="197"/>
        <end position="217"/>
    </location>
</feature>
<feature type="transmembrane region" description="Helical" evidence="1">
    <location>
        <begin position="241"/>
        <end position="261"/>
    </location>
</feature>
<feature type="transmembrane region" description="Helical" evidence="1">
    <location>
        <begin position="273"/>
        <end position="293"/>
    </location>
</feature>
<feature type="transmembrane region" description="Helical" evidence="1">
    <location>
        <begin position="318"/>
        <end position="338"/>
    </location>
</feature>
<feature type="transmembrane region" description="Helical" evidence="1">
    <location>
        <begin position="358"/>
        <end position="378"/>
    </location>
</feature>
<feature type="transmembrane region" description="Helical" evidence="1">
    <location>
        <begin position="383"/>
        <end position="403"/>
    </location>
</feature>
<feature type="transmembrane region" description="Helical" evidence="1">
    <location>
        <begin position="407"/>
        <end position="427"/>
    </location>
</feature>
<accession>P59985</accession>
<accession>A0A1R3Y4R6</accession>
<accession>X2BPF4</accession>
<reference key="1">
    <citation type="journal article" date="2003" name="Proc. Natl. Acad. Sci. U.S.A.">
        <title>The complete genome sequence of Mycobacterium bovis.</title>
        <authorList>
            <person name="Garnier T."/>
            <person name="Eiglmeier K."/>
            <person name="Camus J.-C."/>
            <person name="Medina N."/>
            <person name="Mansoor H."/>
            <person name="Pryor M."/>
            <person name="Duthoy S."/>
            <person name="Grondin S."/>
            <person name="Lacroix C."/>
            <person name="Monsempe C."/>
            <person name="Simon S."/>
            <person name="Harris B."/>
            <person name="Atkin R."/>
            <person name="Doggett J."/>
            <person name="Mayes R."/>
            <person name="Keating L."/>
            <person name="Wheeler P.R."/>
            <person name="Parkhill J."/>
            <person name="Barrell B.G."/>
            <person name="Cole S.T."/>
            <person name="Gordon S.V."/>
            <person name="Hewinson R.G."/>
        </authorList>
    </citation>
    <scope>NUCLEOTIDE SEQUENCE [LARGE SCALE GENOMIC DNA]</scope>
    <source>
        <strain>ATCC BAA-935 / AF2122/97</strain>
    </source>
</reference>
<reference key="2">
    <citation type="journal article" date="2017" name="Genome Announc.">
        <title>Updated reference genome sequence and annotation of Mycobacterium bovis AF2122/97.</title>
        <authorList>
            <person name="Malone K.M."/>
            <person name="Farrell D."/>
            <person name="Stuber T.P."/>
            <person name="Schubert O.T."/>
            <person name="Aebersold R."/>
            <person name="Robbe-Austerman S."/>
            <person name="Gordon S.V."/>
        </authorList>
    </citation>
    <scope>NUCLEOTIDE SEQUENCE [LARGE SCALE GENOMIC DNA]</scope>
    <scope>GENOME REANNOTATION</scope>
    <source>
        <strain>ATCC BAA-935 / AF2122/97</strain>
    </source>
</reference>